<feature type="chain" id="PRO_1000165216" description="HTH-type transcriptional repressor PurR">
    <location>
        <begin position="1"/>
        <end position="340"/>
    </location>
</feature>
<feature type="domain" description="HTH lacI-type" evidence="1">
    <location>
        <begin position="2"/>
        <end position="56"/>
    </location>
</feature>
<feature type="DNA-binding region" description="H-T-H motif" evidence="1">
    <location>
        <begin position="4"/>
        <end position="23"/>
    </location>
</feature>
<feature type="DNA-binding region" evidence="1">
    <location>
        <begin position="48"/>
        <end position="56"/>
    </location>
</feature>
<feature type="binding site" evidence="1">
    <location>
        <position position="73"/>
    </location>
    <ligand>
        <name>hypoxanthine</name>
        <dbReference type="ChEBI" id="CHEBI:17368"/>
    </ligand>
</feature>
<feature type="binding site" evidence="1">
    <location>
        <position position="188"/>
    </location>
    <ligand>
        <name>hypoxanthine</name>
        <dbReference type="ChEBI" id="CHEBI:17368"/>
    </ligand>
</feature>
<feature type="binding site" evidence="1">
    <location>
        <position position="190"/>
    </location>
    <ligand>
        <name>hypoxanthine</name>
        <dbReference type="ChEBI" id="CHEBI:17368"/>
    </ligand>
</feature>
<feature type="binding site" evidence="1">
    <location>
        <position position="219"/>
    </location>
    <ligand>
        <name>hypoxanthine</name>
        <dbReference type="ChEBI" id="CHEBI:17368"/>
    </ligand>
</feature>
<feature type="binding site" evidence="1">
    <location>
        <position position="273"/>
    </location>
    <ligand>
        <name>hypoxanthine</name>
        <dbReference type="ChEBI" id="CHEBI:17368"/>
    </ligand>
</feature>
<sequence>MATIKDVAKLVGVSTTTVSHVINKTRFVAEDTTKAVWEAIASLNYSPSAVARSLKVNTTKSIGMIITTSEAPYFAEIVLAVEEYCYRQGYSLFLCNTQNDAEKVQNHLDMLIKKRVDGILVMCSEYTENSLALFNGTNVPMVVMDWGPNDGKSDRIIDHCLDGGYMATKHLIDNGHRDIAIIAGYLYKTTAKARYDGFVKAMTEAGLLIRKEWIFENDFQPEGGYESMNNLLNQDKLPTAVICGCDAMALGVISAITEKGLSVPQDISVIGYDNIHSSRFYAPPLTTIHQSKTRLGQMAIDTLLERIQQHNEQPSEPVTPKVLEFYPELVVRSSVRNLNQ</sequence>
<protein>
    <recommendedName>
        <fullName evidence="1">HTH-type transcriptional repressor PurR</fullName>
    </recommendedName>
    <alternativeName>
        <fullName evidence="1">Pur regulon repressor</fullName>
    </alternativeName>
    <alternativeName>
        <fullName evidence="1">Purine nucleotide synthesis repressor</fullName>
    </alternativeName>
</protein>
<keyword id="KW-0238">DNA-binding</keyword>
<keyword id="KW-0658">Purine biosynthesis</keyword>
<keyword id="KW-1185">Reference proteome</keyword>
<keyword id="KW-0678">Repressor</keyword>
<keyword id="KW-0804">Transcription</keyword>
<keyword id="KW-0805">Transcription regulation</keyword>
<evidence type="ECO:0000255" key="1">
    <source>
        <dbReference type="HAMAP-Rule" id="MF_01277"/>
    </source>
</evidence>
<proteinExistence type="inferred from homology"/>
<organism>
    <name type="scientific">Glaesserella parasuis serovar 5 (strain SH0165)</name>
    <name type="common">Haemophilus parasuis</name>
    <dbReference type="NCBI Taxonomy" id="557723"/>
    <lineage>
        <taxon>Bacteria</taxon>
        <taxon>Pseudomonadati</taxon>
        <taxon>Pseudomonadota</taxon>
        <taxon>Gammaproteobacteria</taxon>
        <taxon>Pasteurellales</taxon>
        <taxon>Pasteurellaceae</taxon>
        <taxon>Glaesserella</taxon>
    </lineage>
</organism>
<gene>
    <name evidence="1" type="primary">purR</name>
    <name type="ordered locus">HAPS_0522</name>
</gene>
<dbReference type="EMBL" id="CP001321">
    <property type="protein sequence ID" value="ACL32182.1"/>
    <property type="molecule type" value="Genomic_DNA"/>
</dbReference>
<dbReference type="RefSeq" id="WP_005714341.1">
    <property type="nucleotide sequence ID" value="NC_011852.1"/>
</dbReference>
<dbReference type="SMR" id="B8F4D0"/>
<dbReference type="STRING" id="557723.HAPS_0522"/>
<dbReference type="GeneID" id="66618958"/>
<dbReference type="KEGG" id="hap:HAPS_0522"/>
<dbReference type="HOGENOM" id="CLU_037628_6_2_6"/>
<dbReference type="UniPathway" id="UPA00488"/>
<dbReference type="Proteomes" id="UP000006743">
    <property type="component" value="Chromosome"/>
</dbReference>
<dbReference type="GO" id="GO:0003700">
    <property type="term" value="F:DNA-binding transcription factor activity"/>
    <property type="evidence" value="ECO:0007669"/>
    <property type="project" value="TreeGrafter"/>
</dbReference>
<dbReference type="GO" id="GO:0000976">
    <property type="term" value="F:transcription cis-regulatory region binding"/>
    <property type="evidence" value="ECO:0007669"/>
    <property type="project" value="TreeGrafter"/>
</dbReference>
<dbReference type="GO" id="GO:0045892">
    <property type="term" value="P:negative regulation of DNA-templated transcription"/>
    <property type="evidence" value="ECO:0007669"/>
    <property type="project" value="UniProtKB-UniRule"/>
</dbReference>
<dbReference type="GO" id="GO:0006164">
    <property type="term" value="P:purine nucleotide biosynthetic process"/>
    <property type="evidence" value="ECO:0007669"/>
    <property type="project" value="UniProtKB-UniPathway"/>
</dbReference>
<dbReference type="CDD" id="cd01392">
    <property type="entry name" value="HTH_LacI"/>
    <property type="match status" value="1"/>
</dbReference>
<dbReference type="CDD" id="cd06275">
    <property type="entry name" value="PBP1_PurR"/>
    <property type="match status" value="1"/>
</dbReference>
<dbReference type="FunFam" id="1.10.260.40:FF:000002">
    <property type="entry name" value="HTH-type transcriptional repressor PurR"/>
    <property type="match status" value="1"/>
</dbReference>
<dbReference type="Gene3D" id="3.40.50.2300">
    <property type="match status" value="2"/>
</dbReference>
<dbReference type="Gene3D" id="1.10.260.40">
    <property type="entry name" value="lambda repressor-like DNA-binding domains"/>
    <property type="match status" value="1"/>
</dbReference>
<dbReference type="HAMAP" id="MF_01277">
    <property type="entry name" value="HTH_type_PurR"/>
    <property type="match status" value="1"/>
</dbReference>
<dbReference type="InterPro" id="IPR000843">
    <property type="entry name" value="HTH_LacI"/>
</dbReference>
<dbReference type="InterPro" id="IPR046335">
    <property type="entry name" value="LacI/GalR-like_sensor"/>
</dbReference>
<dbReference type="InterPro" id="IPR010982">
    <property type="entry name" value="Lambda_DNA-bd_dom_sf"/>
</dbReference>
<dbReference type="InterPro" id="IPR028082">
    <property type="entry name" value="Peripla_BP_I"/>
</dbReference>
<dbReference type="InterPro" id="IPR023588">
    <property type="entry name" value="Tscrpt_reg_HTH_PurR"/>
</dbReference>
<dbReference type="NCBIfam" id="NF007979">
    <property type="entry name" value="PRK10703.1"/>
    <property type="match status" value="1"/>
</dbReference>
<dbReference type="PANTHER" id="PTHR30146:SF148">
    <property type="entry name" value="HTH-TYPE TRANSCRIPTIONAL REPRESSOR PURR-RELATED"/>
    <property type="match status" value="1"/>
</dbReference>
<dbReference type="PANTHER" id="PTHR30146">
    <property type="entry name" value="LACI-RELATED TRANSCRIPTIONAL REPRESSOR"/>
    <property type="match status" value="1"/>
</dbReference>
<dbReference type="Pfam" id="PF00356">
    <property type="entry name" value="LacI"/>
    <property type="match status" value="1"/>
</dbReference>
<dbReference type="Pfam" id="PF13377">
    <property type="entry name" value="Peripla_BP_3"/>
    <property type="match status" value="1"/>
</dbReference>
<dbReference type="PRINTS" id="PR00036">
    <property type="entry name" value="HTHLACI"/>
</dbReference>
<dbReference type="SMART" id="SM00354">
    <property type="entry name" value="HTH_LACI"/>
    <property type="match status" value="1"/>
</dbReference>
<dbReference type="SUPFAM" id="SSF47413">
    <property type="entry name" value="lambda repressor-like DNA-binding domains"/>
    <property type="match status" value="1"/>
</dbReference>
<dbReference type="SUPFAM" id="SSF53822">
    <property type="entry name" value="Periplasmic binding protein-like I"/>
    <property type="match status" value="1"/>
</dbReference>
<dbReference type="PROSITE" id="PS00356">
    <property type="entry name" value="HTH_LACI_1"/>
    <property type="match status" value="1"/>
</dbReference>
<dbReference type="PROSITE" id="PS50932">
    <property type="entry name" value="HTH_LACI_2"/>
    <property type="match status" value="1"/>
</dbReference>
<reference key="1">
    <citation type="journal article" date="2009" name="J. Bacteriol.">
        <title>Complete genome sequence of Haemophilus parasuis SH0165.</title>
        <authorList>
            <person name="Yue M."/>
            <person name="Yang F."/>
            <person name="Yang J."/>
            <person name="Bei W."/>
            <person name="Cai X."/>
            <person name="Chen L."/>
            <person name="Dong J."/>
            <person name="Zhou R."/>
            <person name="Jin M."/>
            <person name="Jin Q."/>
            <person name="Chen H."/>
        </authorList>
    </citation>
    <scope>NUCLEOTIDE SEQUENCE [LARGE SCALE GENOMIC DNA]</scope>
    <source>
        <strain>SH0165</strain>
    </source>
</reference>
<name>PURR_GLAP5</name>
<accession>B8F4D0</accession>
<comment type="function">
    <text evidence="1">Is the main repressor of the genes involved in the de novo synthesis of purine nucleotides, regulating purB, purC, purEK, purF, purHD, purL, purMN and guaBA expression. PurR is allosterically activated to bind its cognate DNA by binding the purine corepressors, hypoxanthine or guanine, thereby effecting transcription repression.</text>
</comment>
<comment type="pathway">
    <text>Purine metabolism; purine nucleotide biosynthesis [regulation].</text>
</comment>
<comment type="subunit">
    <text evidence="1">Homodimer.</text>
</comment>
<comment type="domain">
    <text evidence="1">Consists of two structural and functional domains: an N-terminal DNA-binding domain, approximately the first 60 residues, and a larger C-terminal domain, approximately 280 residues, which imparts the function of corepressor binding and oligomerization.</text>
</comment>